<accession>Q6DCQ6</accession>
<keyword id="KW-1015">Disulfide bond</keyword>
<keyword id="KW-0245">EGF-like domain</keyword>
<keyword id="KW-1185">Reference proteome</keyword>
<keyword id="KW-0677">Repeat</keyword>
<keyword id="KW-0964">Secreted</keyword>
<keyword id="KW-0732">Signal</keyword>
<protein>
    <recommendedName>
        <fullName>von Willebrand factor A domain-containing protein 2</fullName>
    </recommendedName>
    <alternativeName>
        <fullName>A domain-containing protein similar to matrilin and collagen</fullName>
        <shortName>AMACO</shortName>
    </alternativeName>
</protein>
<organism>
    <name type="scientific">Xenopus laevis</name>
    <name type="common">African clawed frog</name>
    <dbReference type="NCBI Taxonomy" id="8355"/>
    <lineage>
        <taxon>Eukaryota</taxon>
        <taxon>Metazoa</taxon>
        <taxon>Chordata</taxon>
        <taxon>Craniata</taxon>
        <taxon>Vertebrata</taxon>
        <taxon>Euteleostomi</taxon>
        <taxon>Amphibia</taxon>
        <taxon>Batrachia</taxon>
        <taxon>Anura</taxon>
        <taxon>Pipoidea</taxon>
        <taxon>Pipidae</taxon>
        <taxon>Xenopodinae</taxon>
        <taxon>Xenopus</taxon>
        <taxon>Xenopus</taxon>
    </lineage>
</organism>
<gene>
    <name type="primary">vwa2</name>
</gene>
<evidence type="ECO:0000250" key="1"/>
<evidence type="ECO:0000255" key="2"/>
<evidence type="ECO:0000255" key="3">
    <source>
        <dbReference type="PROSITE-ProRule" id="PRU00076"/>
    </source>
</evidence>
<evidence type="ECO:0000255" key="4">
    <source>
        <dbReference type="PROSITE-ProRule" id="PRU00219"/>
    </source>
</evidence>
<evidence type="ECO:0000256" key="5">
    <source>
        <dbReference type="SAM" id="MobiDB-lite"/>
    </source>
</evidence>
<dbReference type="EMBL" id="BC077945">
    <property type="protein sequence ID" value="AAH77945.1"/>
    <property type="molecule type" value="mRNA"/>
</dbReference>
<dbReference type="RefSeq" id="NP_001087052.1">
    <property type="nucleotide sequence ID" value="NM_001093583.1"/>
</dbReference>
<dbReference type="SMR" id="Q6DCQ6"/>
<dbReference type="DNASU" id="446887"/>
<dbReference type="GeneID" id="446887"/>
<dbReference type="KEGG" id="xla:446887"/>
<dbReference type="AGR" id="Xenbase:XB-GENE-6255089"/>
<dbReference type="CTD" id="446887"/>
<dbReference type="Xenbase" id="XB-GENE-6255089">
    <property type="gene designation" value="vwa2.S"/>
</dbReference>
<dbReference type="OrthoDB" id="6132182at2759"/>
<dbReference type="Proteomes" id="UP000186698">
    <property type="component" value="Chromosome 7S"/>
</dbReference>
<dbReference type="Bgee" id="446887">
    <property type="expression patterns" value="Expressed in internal ear and 10 other cell types or tissues"/>
</dbReference>
<dbReference type="GO" id="GO:0005604">
    <property type="term" value="C:basement membrane"/>
    <property type="evidence" value="ECO:0000318"/>
    <property type="project" value="GO_Central"/>
</dbReference>
<dbReference type="GO" id="GO:0005615">
    <property type="term" value="C:extracellular space"/>
    <property type="evidence" value="ECO:0000318"/>
    <property type="project" value="GO_Central"/>
</dbReference>
<dbReference type="GO" id="GO:0005509">
    <property type="term" value="F:calcium ion binding"/>
    <property type="evidence" value="ECO:0007669"/>
    <property type="project" value="InterPro"/>
</dbReference>
<dbReference type="GO" id="GO:0007161">
    <property type="term" value="P:calcium-independent cell-matrix adhesion"/>
    <property type="evidence" value="ECO:0000318"/>
    <property type="project" value="GO_Central"/>
</dbReference>
<dbReference type="CDD" id="cd00054">
    <property type="entry name" value="EGF_CA"/>
    <property type="match status" value="2"/>
</dbReference>
<dbReference type="CDD" id="cd01472">
    <property type="entry name" value="vWA_collagen"/>
    <property type="match status" value="2"/>
</dbReference>
<dbReference type="FunFam" id="2.10.25.10:FF:000066">
    <property type="entry name" value="FAT atypical cadherin 4"/>
    <property type="match status" value="1"/>
</dbReference>
<dbReference type="FunFam" id="2.10.25.10:FF:000336">
    <property type="entry name" value="von Willebrand factor A domain containing 2"/>
    <property type="match status" value="1"/>
</dbReference>
<dbReference type="FunFam" id="3.40.50.410:FF:000047">
    <property type="entry name" value="von Willebrand factor A domain containing 2"/>
    <property type="match status" value="1"/>
</dbReference>
<dbReference type="FunFam" id="3.40.50.410:FF:000054">
    <property type="entry name" value="von Willebrand factor A domain containing 2"/>
    <property type="match status" value="1"/>
</dbReference>
<dbReference type="FunFam" id="3.40.50.410:FF:000058">
    <property type="entry name" value="von Willebrand factor A domain containing 2"/>
    <property type="match status" value="1"/>
</dbReference>
<dbReference type="Gene3D" id="2.10.25.10">
    <property type="entry name" value="Laminin"/>
    <property type="match status" value="2"/>
</dbReference>
<dbReference type="Gene3D" id="3.40.50.410">
    <property type="entry name" value="von Willebrand factor, type A domain"/>
    <property type="match status" value="3"/>
</dbReference>
<dbReference type="InterPro" id="IPR050525">
    <property type="entry name" value="ECM_Assembly_Org"/>
</dbReference>
<dbReference type="InterPro" id="IPR001881">
    <property type="entry name" value="EGF-like_Ca-bd_dom"/>
</dbReference>
<dbReference type="InterPro" id="IPR000742">
    <property type="entry name" value="EGF-like_dom"/>
</dbReference>
<dbReference type="InterPro" id="IPR002035">
    <property type="entry name" value="VWF_A"/>
</dbReference>
<dbReference type="InterPro" id="IPR036465">
    <property type="entry name" value="vWFA_dom_sf"/>
</dbReference>
<dbReference type="PANTHER" id="PTHR24020">
    <property type="entry name" value="COLLAGEN ALPHA"/>
    <property type="match status" value="1"/>
</dbReference>
<dbReference type="PANTHER" id="PTHR24020:SF37">
    <property type="entry name" value="VON WILLEBRAND FACTOR A DOMAIN-CONTAINING PROTEIN 2"/>
    <property type="match status" value="1"/>
</dbReference>
<dbReference type="Pfam" id="PF00008">
    <property type="entry name" value="EGF"/>
    <property type="match status" value="1"/>
</dbReference>
<dbReference type="Pfam" id="PF00092">
    <property type="entry name" value="VWA"/>
    <property type="match status" value="3"/>
</dbReference>
<dbReference type="PRINTS" id="PR00453">
    <property type="entry name" value="VWFADOMAIN"/>
</dbReference>
<dbReference type="SMART" id="SM00181">
    <property type="entry name" value="EGF"/>
    <property type="match status" value="2"/>
</dbReference>
<dbReference type="SMART" id="SM00179">
    <property type="entry name" value="EGF_CA"/>
    <property type="match status" value="2"/>
</dbReference>
<dbReference type="SMART" id="SM00327">
    <property type="entry name" value="VWA"/>
    <property type="match status" value="3"/>
</dbReference>
<dbReference type="SUPFAM" id="SSF57196">
    <property type="entry name" value="EGF/Laminin"/>
    <property type="match status" value="1"/>
</dbReference>
<dbReference type="SUPFAM" id="SSF53300">
    <property type="entry name" value="vWA-like"/>
    <property type="match status" value="3"/>
</dbReference>
<dbReference type="PROSITE" id="PS01186">
    <property type="entry name" value="EGF_2"/>
    <property type="match status" value="1"/>
</dbReference>
<dbReference type="PROSITE" id="PS50026">
    <property type="entry name" value="EGF_3"/>
    <property type="match status" value="2"/>
</dbReference>
<dbReference type="PROSITE" id="PS50234">
    <property type="entry name" value="VWFA"/>
    <property type="match status" value="3"/>
</dbReference>
<name>VWA2_XENLA</name>
<reference key="1">
    <citation type="submission" date="2004-07" db="EMBL/GenBank/DDBJ databases">
        <authorList>
            <consortium name="NIH - Xenopus Gene Collection (XGC) project"/>
        </authorList>
    </citation>
    <scope>NUCLEOTIDE SEQUENCE [LARGE SCALE MRNA]</scope>
    <source>
        <tissue>Embryo</tissue>
    </source>
</reference>
<proteinExistence type="evidence at transcript level"/>
<comment type="subunit">
    <text evidence="1">Forms monomers and multimers.</text>
</comment>
<comment type="subcellular location">
    <subcellularLocation>
        <location evidence="1">Secreted</location>
    </subcellularLocation>
</comment>
<sequence>MRLPWVNGILAFLSSQVLQCLCVQELHVNAETANKISAAGRRMRCSSPLDILILLDGSNSIGRGSFERSKHFASKLCDALDIGSDLIRVGAMQYSGAPQVEFRLDSSFSKAAIKEKIKSIVFKGGPTETGLALKYIVWKGFPGGRPASVPKILIIVSDGKSQGNIKLPAAQIKGEDIEVFTVGVKFPRWEELHALSSEPQEAHVLFAEHVDDAVNGLATSLTNSSLCSSVPHGCSVQSFPCTRKTLETVKELTGNYMCWKGSARPGTVFPGHCPFYSWRRFYNKHQAQCHRTVCPDPCDSQPCKNGGTCIAEGQDKYHCVCPAGFGGDTECAPQLSLECNIDLLFLVDSSDTTSLEAFMQHKSFLKRFIQASLSDESPLNVGVAQYSNEVQMVVKIGEYQSMAELLKHIDNMRFMGGGLFTGKALRYVTQYGFKSTPVFSDVRDDLPRLVVLLTGSKSQDSVTGPATYARDQEVFLIGVTSDSNKGEMAEIVGNPLNLVTYSNPQQLFNQLPQLQKRICSIDVQGCQAQPLDLAFVLDASTAVGQEKFNRLKNFVTMVSLQFDINRDVTQIGLVTYSSRPETVFGLDTHDSGSSLLQGIGRASYMGGSASTGSALLRVYNDVMTVQKGARPGVNKAVVVITDGRGAEDAAVPAQKLRDNGIMVYVIGIGNIQRNSLLRLAGSEKFLISVPSYESLGHYEDSVVQRVCEDAKSPVNLCKPNPCMNDGVCILRQGSYRCDCRGWDGPHCETRILRGDSHWPQGLHSRSRQQRHSRKRRLKSVSGSRSSRKKP</sequence>
<feature type="signal peptide" evidence="2">
    <location>
        <begin position="1"/>
        <end position="22"/>
    </location>
</feature>
<feature type="chain" id="PRO_0000307363" description="von Willebrand factor A domain-containing protein 2">
    <location>
        <begin position="23"/>
        <end position="790"/>
    </location>
</feature>
<feature type="domain" description="VWFA 1" evidence="4">
    <location>
        <begin position="50"/>
        <end position="221"/>
    </location>
</feature>
<feature type="domain" description="EGF-like 1" evidence="3">
    <location>
        <begin position="295"/>
        <end position="332"/>
    </location>
</feature>
<feature type="domain" description="VWFA 2" evidence="4">
    <location>
        <begin position="342"/>
        <end position="518"/>
    </location>
</feature>
<feature type="domain" description="VWFA 3" evidence="4">
    <location>
        <begin position="532"/>
        <end position="702"/>
    </location>
</feature>
<feature type="domain" description="EGF-like 2" evidence="3">
    <location>
        <begin position="713"/>
        <end position="748"/>
    </location>
</feature>
<feature type="region of interest" description="Disordered" evidence="5">
    <location>
        <begin position="758"/>
        <end position="790"/>
    </location>
</feature>
<feature type="compositionally biased region" description="Basic residues" evidence="5">
    <location>
        <begin position="764"/>
        <end position="778"/>
    </location>
</feature>
<feature type="disulfide bond" evidence="3">
    <location>
        <begin position="298"/>
        <end position="309"/>
    </location>
</feature>
<feature type="disulfide bond" evidence="3">
    <location>
        <begin position="303"/>
        <end position="319"/>
    </location>
</feature>
<feature type="disulfide bond" evidence="3">
    <location>
        <begin position="321"/>
        <end position="331"/>
    </location>
</feature>
<feature type="disulfide bond" evidence="3">
    <location>
        <begin position="717"/>
        <end position="728"/>
    </location>
</feature>
<feature type="disulfide bond" evidence="3">
    <location>
        <begin position="722"/>
        <end position="737"/>
    </location>
</feature>
<feature type="disulfide bond" evidence="3">
    <location>
        <begin position="739"/>
        <end position="747"/>
    </location>
</feature>